<feature type="initiator methionine" description="Removed" evidence="1">
    <location>
        <position position="1"/>
    </location>
</feature>
<feature type="chain" id="PRO_0000192983" description="Leghemoglobin 3">
    <location>
        <begin position="2"/>
        <end position="147"/>
    </location>
</feature>
<feature type="domain" description="Globin" evidence="6">
    <location>
        <begin position="2"/>
        <end position="147"/>
    </location>
</feature>
<feature type="binding site" evidence="3">
    <location>
        <position position="45"/>
    </location>
    <ligand>
        <name>heme b</name>
        <dbReference type="ChEBI" id="CHEBI:60344"/>
    </ligand>
</feature>
<feature type="binding site" evidence="3">
    <location>
        <position position="61"/>
    </location>
    <ligand>
        <name>O2</name>
        <dbReference type="ChEBI" id="CHEBI:15379"/>
    </ligand>
</feature>
<feature type="binding site" evidence="3">
    <location>
        <position position="64"/>
    </location>
    <ligand>
        <name>heme b</name>
        <dbReference type="ChEBI" id="CHEBI:60344"/>
    </ligand>
</feature>
<feature type="binding site" description="proximal binding residue" evidence="6">
    <location>
        <position position="93"/>
    </location>
    <ligand>
        <name>heme b</name>
        <dbReference type="ChEBI" id="CHEBI:60344"/>
    </ligand>
    <ligandPart>
        <name>Fe</name>
        <dbReference type="ChEBI" id="CHEBI:18248"/>
    </ligandPart>
</feature>
<feature type="binding site" evidence="3">
    <location>
        <position position="96"/>
    </location>
    <ligand>
        <name>heme b</name>
        <dbReference type="ChEBI" id="CHEBI:60344"/>
    </ligand>
</feature>
<feature type="modified residue" description="Nitrated tyrosine" evidence="2">
    <location>
        <position position="30"/>
    </location>
</feature>
<feature type="modified residue" description="Phosphoserine" evidence="4">
    <location>
        <position position="45"/>
    </location>
</feature>
<feature type="modified residue" description="Nitrated tyrosine" evidence="2">
    <location>
        <position position="135"/>
    </location>
</feature>
<dbReference type="EMBL" id="AB042718">
    <property type="protein sequence ID" value="BAB18108.1"/>
    <property type="molecule type" value="Genomic_DNA"/>
</dbReference>
<dbReference type="EMBL" id="AB238219">
    <property type="protein sequence ID" value="BAE46738.1"/>
    <property type="molecule type" value="mRNA"/>
</dbReference>
<dbReference type="EMBL" id="BT134204">
    <property type="protein sequence ID" value="AFK33999.1"/>
    <property type="molecule type" value="mRNA"/>
</dbReference>
<dbReference type="EMBL" id="BT147367">
    <property type="protein sequence ID" value="AFK47161.1"/>
    <property type="molecule type" value="mRNA"/>
</dbReference>
<dbReference type="RefSeq" id="NP_001414706.1">
    <property type="nucleotide sequence ID" value="NM_001427777.1"/>
</dbReference>
<dbReference type="SMR" id="Q9FEP8"/>
<dbReference type="GeneID" id="130717973"/>
<dbReference type="OrthoDB" id="2012505at2759"/>
<dbReference type="GO" id="GO:0005829">
    <property type="term" value="C:cytosol"/>
    <property type="evidence" value="ECO:0007669"/>
    <property type="project" value="UniProtKB-SubCell"/>
</dbReference>
<dbReference type="GO" id="GO:0043663">
    <property type="term" value="C:host bacteroid-containing symbiosome"/>
    <property type="evidence" value="ECO:0000314"/>
    <property type="project" value="UniProtKB"/>
</dbReference>
<dbReference type="GO" id="GO:0005634">
    <property type="term" value="C:nucleus"/>
    <property type="evidence" value="ECO:0007669"/>
    <property type="project" value="UniProtKB-SubCell"/>
</dbReference>
<dbReference type="GO" id="GO:0020037">
    <property type="term" value="F:heme binding"/>
    <property type="evidence" value="ECO:0007669"/>
    <property type="project" value="InterPro"/>
</dbReference>
<dbReference type="GO" id="GO:0046872">
    <property type="term" value="F:metal ion binding"/>
    <property type="evidence" value="ECO:0007669"/>
    <property type="project" value="UniProtKB-KW"/>
</dbReference>
<dbReference type="GO" id="GO:0019825">
    <property type="term" value="F:oxygen binding"/>
    <property type="evidence" value="ECO:0007669"/>
    <property type="project" value="InterPro"/>
</dbReference>
<dbReference type="GO" id="GO:0005344">
    <property type="term" value="F:oxygen carrier activity"/>
    <property type="evidence" value="ECO:0007669"/>
    <property type="project" value="UniProtKB-KW"/>
</dbReference>
<dbReference type="GO" id="GO:0032364">
    <property type="term" value="P:intracellular oxygen homeostasis"/>
    <property type="evidence" value="ECO:0000315"/>
    <property type="project" value="UniProtKB"/>
</dbReference>
<dbReference type="GO" id="GO:0009877">
    <property type="term" value="P:nodulation"/>
    <property type="evidence" value="ECO:0000315"/>
    <property type="project" value="UniProtKB"/>
</dbReference>
<dbReference type="GO" id="GO:0009609">
    <property type="term" value="P:response to symbiotic bacterium"/>
    <property type="evidence" value="ECO:0000315"/>
    <property type="project" value="UniProtKB"/>
</dbReference>
<dbReference type="Gene3D" id="1.10.490.10">
    <property type="entry name" value="Globins"/>
    <property type="match status" value="1"/>
</dbReference>
<dbReference type="InterPro" id="IPR000971">
    <property type="entry name" value="Globin"/>
</dbReference>
<dbReference type="InterPro" id="IPR009050">
    <property type="entry name" value="Globin-like_sf"/>
</dbReference>
<dbReference type="InterPro" id="IPR012292">
    <property type="entry name" value="Globin/Proto"/>
</dbReference>
<dbReference type="InterPro" id="IPR001032">
    <property type="entry name" value="Leghaemoglobin-like"/>
</dbReference>
<dbReference type="InterPro" id="IPR019824">
    <property type="entry name" value="Leghaemoglobin_Fe_BS"/>
</dbReference>
<dbReference type="PANTHER" id="PTHR22924">
    <property type="entry name" value="LEGHEMOGLOBIN-RELATED"/>
    <property type="match status" value="1"/>
</dbReference>
<dbReference type="PANTHER" id="PTHR22924:SF92">
    <property type="entry name" value="NON-SYMBIOTIC HEMOGLOBIN 2"/>
    <property type="match status" value="1"/>
</dbReference>
<dbReference type="Pfam" id="PF00042">
    <property type="entry name" value="Globin"/>
    <property type="match status" value="1"/>
</dbReference>
<dbReference type="PRINTS" id="PR00188">
    <property type="entry name" value="PLANTGLOBIN"/>
</dbReference>
<dbReference type="SUPFAM" id="SSF46458">
    <property type="entry name" value="Globin-like"/>
    <property type="match status" value="1"/>
</dbReference>
<dbReference type="PROSITE" id="PS01033">
    <property type="entry name" value="GLOBIN"/>
    <property type="match status" value="1"/>
</dbReference>
<dbReference type="PROSITE" id="PS00208">
    <property type="entry name" value="PLANT_GLOBIN"/>
    <property type="match status" value="1"/>
</dbReference>
<comment type="function">
    <text evidence="5 8 9 10 11 13 14">Leghemoglobin that reversibly binds oxygen O(2) through a pentacoordinated heme iron (By similarity). In root nodules, facilitates the diffusion of oxygen to the bacteroids while preventing the bacterial nitrogenase from being inactivated by buffering dioxygen, nitric oxide and carbon monoxide, and promoting the formation of reactive oxygen species (ROS, e.g. H(2)O(2)) (PubMed:15797021, PubMed:17540516, PubMed:17990967, PubMed:19522562, PubMed:31355948, PubMed:32442331). This role is essential for symbiotic nitrogen fixation (SNF) (PubMed:15797021, PubMed:17540516, PubMed:17990967, PubMed:19522562, PubMed:31355948, PubMed:32442331).</text>
</comment>
<comment type="subunit">
    <text evidence="3">Monomer.</text>
</comment>
<comment type="subcellular location">
    <subcellularLocation>
        <location evidence="3">Cytoplasm</location>
        <location evidence="3">Cytosol</location>
    </subcellularLocation>
    <subcellularLocation>
        <location evidence="3">Nucleus</location>
    </subcellularLocation>
</comment>
<comment type="tissue specificity">
    <text evidence="7 11">Specifically and strongly expressed in root nodules and at low levels in seedlings.</text>
</comment>
<comment type="developmental stage">
    <text evidence="11">In nodulating roots, accumulates during nodule maturation, and fades out progressively in aging and senescent nodules.</text>
</comment>
<comment type="induction">
    <text evidence="11">Accumulates in developing root nodules upon inoculation with the symbiotic M.loti strain MAFF303099.</text>
</comment>
<comment type="PTM">
    <text evidence="2">Nitrated in effective nodules and particularly in hypoxic conditions; this mechanism may play a protective role in the symbiosis by buffering toxic peroxynitrite NO(2)(-). Nitration level decrease during nodule senescence.</text>
</comment>
<comment type="PTM">
    <text evidence="4">Phosphorylation at Ser-45 disrupts the molecular environment of its porphyrin ring oxygen binding pocket, thus leading to a reduced oxygen consumption and to the delivery of oxygen O(2) to symbiosomes.</text>
</comment>
<comment type="disruption phenotype">
    <text evidence="8 9 11">Normal growth and flowering under non-restrictive nutrient conditions, but classic symptoms of extreme nitrogen limitation under restrictive nutrient conditions, including severely stunted growth, increased root/shoot ratio and delayed flowering (PubMed:15797021). Following inoculation with symbiotic rhizobia, accumulation of free oxygen at the expense of reactive oxygen species (ROS, e.g. H(2)O(2)) production in root nodules leading to the loss of bacterial nitrogenase protein and the absence of symbiotic nitrogen fixation (SNF), as well as decreased ATP/ADP ratio; bacteroids of these impaired nodules exhibit altered ultrastructure due to disturbed bacterial differentiation (PubMed:15797021, PubMed:17990967). In symbiotic conditions, plants lacking leghemoglobins lb13, lb23 and lb123 have reduced growth and exhibit lower N(2) fixation in root nodules displaying ultrastructural alterations including abnormal mitochondria and large lytic vacuoles, associated with increased reactive oxygen species (ROS) accumulation as well as early nodules senescence (PubMed:31355948).</text>
</comment>
<comment type="similarity">
    <text evidence="15">Belongs to the plant globin family.</text>
</comment>
<evidence type="ECO:0000250" key="1">
    <source>
        <dbReference type="UniProtKB" id="P02233"/>
    </source>
</evidence>
<evidence type="ECO:0000250" key="2">
    <source>
        <dbReference type="UniProtKB" id="P02234"/>
    </source>
</evidence>
<evidence type="ECO:0000250" key="3">
    <source>
        <dbReference type="UniProtKB" id="P02240"/>
    </source>
</evidence>
<evidence type="ECO:0000250" key="4">
    <source>
        <dbReference type="UniProtKB" id="Q3C1F7"/>
    </source>
</evidence>
<evidence type="ECO:0000250" key="5">
    <source>
        <dbReference type="UniProtKB" id="Q43296"/>
    </source>
</evidence>
<evidence type="ECO:0000255" key="6">
    <source>
        <dbReference type="PROSITE-ProRule" id="PRU00238"/>
    </source>
</evidence>
<evidence type="ECO:0000269" key="7">
    <source>
    </source>
</evidence>
<evidence type="ECO:0000269" key="8">
    <source>
    </source>
</evidence>
<evidence type="ECO:0000269" key="9">
    <source>
    </source>
</evidence>
<evidence type="ECO:0000269" key="10">
    <source>
    </source>
</evidence>
<evidence type="ECO:0000269" key="11">
    <source>
    </source>
</evidence>
<evidence type="ECO:0000303" key="12">
    <source>
    </source>
</evidence>
<evidence type="ECO:0000303" key="13">
    <source>
    </source>
</evidence>
<evidence type="ECO:0000303" key="14">
    <source>
    </source>
</evidence>
<evidence type="ECO:0000305" key="15"/>
<evidence type="ECO:0000305" key="16">
    <source>
    </source>
</evidence>
<keyword id="KW-0963">Cytoplasm</keyword>
<keyword id="KW-0349">Heme</keyword>
<keyword id="KW-0408">Iron</keyword>
<keyword id="KW-0479">Metal-binding</keyword>
<keyword id="KW-0944">Nitration</keyword>
<keyword id="KW-0535">Nitrogen fixation</keyword>
<keyword id="KW-0536">Nodulation</keyword>
<keyword id="KW-0539">Nucleus</keyword>
<keyword id="KW-0561">Oxygen transport</keyword>
<keyword id="KW-0597">Phosphoprotein</keyword>
<keyword id="KW-0813">Transport</keyword>
<name>LGB3_LOTJA</name>
<reference key="1">
    <citation type="submission" date="2000-05" db="EMBL/GenBank/DDBJ databases">
        <title>Genomic leghemoglobin genes of Lotus japonicus.</title>
        <authorList>
            <person name="Uchiumi T."/>
            <person name="Tsuruta T."/>
            <person name="Suzuki A."/>
            <person name="Abe M."/>
            <person name="Higashi S."/>
        </authorList>
    </citation>
    <scope>NUCLEOTIDE SEQUENCE [GENOMIC DNA]</scope>
    <source>
        <strain>cv. Gifu</strain>
    </source>
</reference>
<reference key="2">
    <citation type="journal article" date="2002" name="Plant Cell Physiol.">
        <title>Expression of symbiotic and nonsymbiotic globin genes responding to microsymbionts on Lotus japonicus.</title>
        <authorList>
            <person name="Uchiumi T."/>
            <person name="Shimoda Y."/>
            <person name="Tsuruta T."/>
            <person name="Mukoyoshi Y."/>
            <person name="Suzuki A."/>
            <person name="Senoo K."/>
            <person name="Sato S."/>
            <person name="Kato T."/>
            <person name="Tabata S."/>
            <person name="Higashi S."/>
            <person name="Abe M."/>
        </authorList>
    </citation>
    <scope>NUCLEOTIDE SEQUENCE [MRNA]</scope>
    <scope>TISSUE SPECIFICITY</scope>
    <source>
        <strain>cv. MG-20</strain>
        <tissue>Root nodule</tissue>
    </source>
</reference>
<reference key="3">
    <citation type="submission" date="2012-05" db="EMBL/GenBank/DDBJ databases">
        <authorList>
            <person name="Krishnakumar V."/>
            <person name="Cheung F."/>
            <person name="Xiao Y."/>
            <person name="Chan A."/>
            <person name="Moskal W.A."/>
            <person name="Town C.D."/>
        </authorList>
    </citation>
    <scope>NUCLEOTIDE SEQUENCE [MRNA]</scope>
</reference>
<reference key="4">
    <citation type="journal article" date="2005" name="Curr. Biol.">
        <title>Symbiotic leghemoglobins are crucial for nitrogen fixation in legume root nodules but not for general plant growth and development.</title>
        <authorList>
            <person name="Ott T."/>
            <person name="van Dongen J.T."/>
            <person name="Guenther C."/>
            <person name="Krusell L."/>
            <person name="Desbrosses G."/>
            <person name="Vigeolas H."/>
            <person name="Bock V."/>
            <person name="Czechowski T."/>
            <person name="Geigenberger P."/>
            <person name="Udvardi M.K."/>
        </authorList>
    </citation>
    <scope>FUNCTION</scope>
    <scope>DISRUPTION PHENOTYPE</scope>
    <source>
        <strain>cv. Gifu</strain>
    </source>
</reference>
<reference key="5">
    <citation type="journal article" date="2007" name="Gene">
        <title>Plant hemoglobins: what we know six decades after their discovery.</title>
        <authorList>
            <person name="Garrocho-Villegas V."/>
            <person name="Gopalasubramaniam S.K."/>
            <person name="Arredondo-Peter R."/>
        </authorList>
    </citation>
    <scope>REVIEW ON PHYTOGLOBINS</scope>
</reference>
<reference key="6">
    <citation type="journal article" date="2007" name="Mol. Plant Microbe Interact.">
        <title>Metabolism of reactive oxygen species is attenuated in leghemoglobin-deficient nodules of Lotus japonicus.</title>
        <authorList>
            <person name="Guenther C."/>
            <person name="Schlereth A."/>
            <person name="Udvardi M."/>
            <person name="Ott T."/>
        </authorList>
    </citation>
    <scope>FUNCTION</scope>
    <scope>DISRUPTION PHENOTYPE</scope>
    <source>
        <strain>cv. Gifu</strain>
    </source>
</reference>
<reference key="7">
    <citation type="journal article" date="2009" name="Mol. Plant Microbe Interact.">
        <title>Absence of symbiotic leghemoglobins alters bacteroid and plant cell differentiation during development of Lotus japonicus root nodules.</title>
        <authorList>
            <person name="Ott T."/>
            <person name="Sullivan J."/>
            <person name="James E.K."/>
            <person name="Flemetakis E."/>
            <person name="Guenther C."/>
            <person name="Gibon Y."/>
            <person name="Ronson C."/>
            <person name="Udvardi M."/>
        </authorList>
    </citation>
    <scope>FUNCTION</scope>
    <scope>DISRUPTION PHENOTYPE</scope>
    <source>
        <strain>cv. Gifu</strain>
    </source>
</reference>
<reference key="8">
    <citation type="journal article" date="2019" name="New Phytol.">
        <title>CRISPR/Cas9 knockout of leghemoglobin genes in Lotus japonicus uncovers their synergistic roles in symbiotic nitrogen fixation.</title>
        <authorList>
            <person name="Wang L."/>
            <person name="Rubio M.C."/>
            <person name="Xin X."/>
            <person name="Zhang B."/>
            <person name="Fan Q."/>
            <person name="Wang Q."/>
            <person name="Ning G."/>
            <person name="Becana M."/>
            <person name="Duanmu D."/>
        </authorList>
    </citation>
    <scope>FUNCTION</scope>
    <scope>DISRUPTION PHENOTYPE</scope>
    <scope>TISSUE SPECIFICITY</scope>
    <scope>INDUCTION BY MESORHIZOBIUM LOTI</scope>
    <scope>DEVELOPMENTAL STAGE</scope>
    <source>
        <strain>cv. MG-20</strain>
    </source>
</reference>
<reference key="9">
    <citation type="journal article" date="2020" name="New Phytol.">
        <title>Hemoglobins in the legume-Rhizobium symbiosis.</title>
        <authorList>
            <person name="Larrainzar E."/>
            <person name="Villar I."/>
            <person name="Rubio M.C."/>
            <person name="Perez-Rontome C."/>
            <person name="Huertas R."/>
            <person name="Sato S."/>
            <person name="Mun J.-H."/>
            <person name="Becana M."/>
        </authorList>
    </citation>
    <scope>REVIEW ON PHYTOGLOBINS</scope>
    <scope>GENE FAMILY</scope>
    <scope>NOMENCLATURE</scope>
</reference>
<proteinExistence type="evidence at transcript level"/>
<organism>
    <name type="scientific">Lotus japonicus</name>
    <name type="common">Lotus corniculatus var. japonicus</name>
    <dbReference type="NCBI Taxonomy" id="34305"/>
    <lineage>
        <taxon>Eukaryota</taxon>
        <taxon>Viridiplantae</taxon>
        <taxon>Streptophyta</taxon>
        <taxon>Embryophyta</taxon>
        <taxon>Tracheophyta</taxon>
        <taxon>Spermatophyta</taxon>
        <taxon>Magnoliopsida</taxon>
        <taxon>eudicotyledons</taxon>
        <taxon>Gunneridae</taxon>
        <taxon>Pentapetalae</taxon>
        <taxon>rosids</taxon>
        <taxon>fabids</taxon>
        <taxon>Fabales</taxon>
        <taxon>Fabaceae</taxon>
        <taxon>Papilionoideae</taxon>
        <taxon>50 kb inversion clade</taxon>
        <taxon>NPAAA clade</taxon>
        <taxon>Hologalegina</taxon>
        <taxon>robinioid clade</taxon>
        <taxon>Loteae</taxon>
        <taxon>Lotus</taxon>
    </lineage>
</organism>
<gene>
    <name evidence="12 14" type="primary">LB3</name>
    <name evidence="16" type="ORF">Lj5g3v0465970</name>
    <name evidence="16" type="ORF">LotjaGi5g1v0046500</name>
</gene>
<accession>Q9FEP8</accession>
<accession>Q3C1F5</accession>
<sequence>MGFTAQQEALVGSSYETFKKNLPTNSVLFYTVILEIAPTAKDMFSFLKESGPKHSPQLQAHAEKVFALTRDAATQLVAKGEVTLADASLGAVHVQKAVTDPHFVVVKEALLQTVKEAVGADEWSDDLSTAWEGAYDGLATAIKKAMG</sequence>
<protein>
    <recommendedName>
        <fullName evidence="12">Leghemoglobin 3</fullName>
        <shortName evidence="12 14">LjLb3</shortName>
    </recommendedName>
    <alternativeName>
        <fullName evidence="12">Symbiotic hemoglobin Lb3</fullName>
        <shortName evidence="12">Sym-Hb Lb3</shortName>
    </alternativeName>
</protein>